<evidence type="ECO:0000250" key="1">
    <source>
        <dbReference type="UniProtKB" id="A0A0H3HIJ5"/>
    </source>
</evidence>
<evidence type="ECO:0000250" key="2">
    <source>
        <dbReference type="UniProtKB" id="P0C2W0"/>
    </source>
</evidence>
<evidence type="ECO:0000256" key="3">
    <source>
        <dbReference type="SAM" id="MobiDB-lite"/>
    </source>
</evidence>
<evidence type="ECO:0000269" key="4">
    <source>
    </source>
</evidence>
<evidence type="ECO:0000303" key="5">
    <source>
    </source>
</evidence>
<evidence type="ECO:0000305" key="6"/>
<evidence type="ECO:0000312" key="7">
    <source>
        <dbReference type="EMBL" id="AAU48866.1"/>
    </source>
</evidence>
<feature type="signal peptide" evidence="6">
    <location>
        <begin position="1"/>
        <end position="71"/>
    </location>
</feature>
<feature type="chain" id="PRO_0000446521" description="Autotransporter adhesin BpaC">
    <location>
        <begin position="72"/>
        <end position="1012"/>
    </location>
</feature>
<feature type="region of interest" description="Surface exposed passenger domain" evidence="2">
    <location>
        <begin position="72"/>
        <end position="921"/>
    </location>
</feature>
<feature type="region of interest" description="Disordered" evidence="3">
    <location>
        <begin position="420"/>
        <end position="746"/>
    </location>
</feature>
<feature type="region of interest" description="Disordered" evidence="3">
    <location>
        <begin position="785"/>
        <end position="809"/>
    </location>
</feature>
<feature type="region of interest" description="Outer membrane translocation of the passenger domain" evidence="2">
    <location>
        <begin position="922"/>
        <end position="959"/>
    </location>
</feature>
<feature type="region of interest" description="Translocator domain" evidence="2">
    <location>
        <begin position="960"/>
        <end position="1012"/>
    </location>
</feature>
<feature type="compositionally biased region" description="Polar residues" evidence="3">
    <location>
        <begin position="427"/>
        <end position="442"/>
    </location>
</feature>
<feature type="compositionally biased region" description="Low complexity" evidence="3">
    <location>
        <begin position="443"/>
        <end position="504"/>
    </location>
</feature>
<feature type="compositionally biased region" description="Polar residues" evidence="3">
    <location>
        <begin position="505"/>
        <end position="519"/>
    </location>
</feature>
<feature type="compositionally biased region" description="Low complexity" evidence="3">
    <location>
        <begin position="520"/>
        <end position="588"/>
    </location>
</feature>
<feature type="compositionally biased region" description="Polar residues" evidence="3">
    <location>
        <begin position="589"/>
        <end position="603"/>
    </location>
</feature>
<feature type="compositionally biased region" description="Low complexity" evidence="3">
    <location>
        <begin position="604"/>
        <end position="630"/>
    </location>
</feature>
<feature type="compositionally biased region" description="Polar residues" evidence="3">
    <location>
        <begin position="631"/>
        <end position="645"/>
    </location>
</feature>
<feature type="compositionally biased region" description="Low complexity" evidence="3">
    <location>
        <begin position="646"/>
        <end position="700"/>
    </location>
</feature>
<feature type="compositionally biased region" description="Low complexity" evidence="3">
    <location>
        <begin position="708"/>
        <end position="746"/>
    </location>
</feature>
<sequence length="1012" mass="94759">MNRIFKSIWCEQTRTWVAASEHAVARGGRASSVVASAGGLEKVLKLSILGAASLIAMGVVGPFAEEAMAANNAGVCLTYNGSSNNTSGTGGWFADGCKSAGWVQGMVTNSKTDWVGLTADDTQIVLDGSAGSIYFRTGGINGNVLTMSNATGGVLLSGLAAGVNPTDAVNMSQLTSLSTSTATGITSLSTSTATSIASLSTSMLSLGVGVVTQDASSGAISVGANSPGLTVDFAGGQGPRTLTGVAAGVNATDAVNVGQLASLSTSTAAGLSTAASGVASLSTSLLGAAGDLASLSTSASTGLATADSGIASLSTSLLGTADNVTSLSTSLSTVNANLAGLQTSVDNVVSYDDPSKSAITLGGAGVATPVLLTNVAAGKIAATSTDAVNGSQLYTLQQEFSQQYDLLTSQVSSLSTSVSGLQGSVSANTGTASGDNSTASGDNATASGTNSTANGTNSTASGDNSTASGTNASASGENSTATGTDSTASGSNSTANGTNSTASGDNSTASGTNASATGENSTATGTDSTASGSNSTANGTNSTASGDSSTASGTNASATGENSTATGTDSTASGSNSTANGTNSTASGDNSTASGTNASATGENSTATGTDSTASGSNSTANGTNSTASGDNSTASGTNASATGENSTATGTDSTASGSNSTANGANSTASGENSTATGTDSTASGSNSTANGTNSTASGDNSTASGTNASATGENSTATGTASTASGSNSTANGANSTASGAGATATGENAAATGAGATATGNNASASGTSSTAGGANAIASGENSTANGANSTASGNGSSAFGESAAAAGDGSTALGANAVASGVGSVATGAGSVASGANSSAYGTGSNATGAGSVAIGQGATASGSNSVALGTGSVASEDNTVSVGSAGSERRITNVAAGVNATDAVNVGQLNSAVSGIRNQMDGMQGQIDTLARDAYSGIAAATALTMIPDVDPGKTLAVGIGTANFKGYQASALGATARITQNLKVKTGVSYSGSNYVWGAGMSYQW</sequence>
<accession>A0A0H2WHF1</accession>
<protein>
    <recommendedName>
        <fullName evidence="6">Autotransporter adhesin BpaC</fullName>
    </recommendedName>
    <alternativeName>
        <fullName evidence="6">Type 5 secretion system autotransporter BpaC</fullName>
    </alternativeName>
</protein>
<gene>
    <name evidence="5" type="primary">bpaC</name>
    <name evidence="7" type="ordered locus">BMA1027</name>
</gene>
<comment type="function">
    <text evidence="4">Involved in virulence. Mediates adherence to human respiratory epithelial cells.</text>
</comment>
<comment type="subunit">
    <text evidence="2">Homotrimer.</text>
</comment>
<comment type="subcellular location">
    <subcellularLocation>
        <location evidence="1">Cell surface</location>
    </subcellularLocation>
    <subcellularLocation>
        <location evidence="2">Cell outer membrane</location>
    </subcellularLocation>
    <text evidence="2">The C-terminal translocator domain is localized in the outer membrane and the passenger domain is at the cell surface.</text>
</comment>
<comment type="induction">
    <text evidence="4">Expressed in vivo during the course of aerosol infection. Expressed at very low levels under routine laboratory growth conditions.</text>
</comment>
<comment type="domain">
    <text evidence="1">Contains a well-conserved 23 amino acid extended signal peptide region (ESPR) preceding a typical N-terminal signal sequence. ESPR region may be involved in regulating the translocation of the autotransporter across the inner membrane into the periplasm.</text>
</comment>
<comment type="domain">
    <text evidence="2">The signal peptide, cleaved at the inner membrane, guides the autotransporter protein to the periplasmic space. Then, insertion of the C-terminal translocator domain in the outer membrane forms a hydrophilic pore for the translocation of the passenger domain to the bacterial cell surface.</text>
</comment>
<comment type="disruption phenotype">
    <text evidence="4">Inactivation of the gene substantially reduces adherence to monolayers of HEp-2 laryngeal cells and A549 type II pneumocytes, as well as to cultures of normal human bronchial epithelium (NHBE). Mutation does not affect the virulence in a mouse model of aerosol infection.</text>
</comment>
<comment type="similarity">
    <text evidence="6">Belongs to the autotransporter-2 (AT-2) (TC 1.B.40) family.</text>
</comment>
<reference key="1">
    <citation type="journal article" date="2004" name="Proc. Natl. Acad. Sci. U.S.A.">
        <title>Structural flexibility in the Burkholderia mallei genome.</title>
        <authorList>
            <person name="Nierman W.C."/>
            <person name="DeShazer D."/>
            <person name="Kim H.S."/>
            <person name="Tettelin H."/>
            <person name="Nelson K.E."/>
            <person name="Feldblyum T.V."/>
            <person name="Ulrich R.L."/>
            <person name="Ronning C.M."/>
            <person name="Brinkac L.M."/>
            <person name="Daugherty S.C."/>
            <person name="Davidsen T.D."/>
            <person name="DeBoy R.T."/>
            <person name="Dimitrov G."/>
            <person name="Dodson R.J."/>
            <person name="Durkin A.S."/>
            <person name="Gwinn M.L."/>
            <person name="Haft D.H."/>
            <person name="Khouri H.M."/>
            <person name="Kolonay J.F."/>
            <person name="Madupu R."/>
            <person name="Mohammoud Y."/>
            <person name="Nelson W.C."/>
            <person name="Radune D."/>
            <person name="Romero C.M."/>
            <person name="Sarria S."/>
            <person name="Selengut J."/>
            <person name="Shamblin C."/>
            <person name="Sullivan S.A."/>
            <person name="White O."/>
            <person name="Yu Y."/>
            <person name="Zafar N."/>
            <person name="Zhou L."/>
            <person name="Fraser C.M."/>
        </authorList>
    </citation>
    <scope>NUCLEOTIDE SEQUENCE [LARGE SCALE GENOMIC DNA]</scope>
    <source>
        <strain>ATCC 23344</strain>
    </source>
</reference>
<reference key="2">
    <citation type="journal article" date="2014" name="BMC Microbiol.">
        <title>Characterization of an autotransporter adhesin protein shared by Burkholderia mallei and Burkholderia pseudomallei.</title>
        <authorList>
            <person name="Lafontaine E.R."/>
            <person name="Balder R."/>
            <person name="Michel F."/>
            <person name="Hogan R.J."/>
        </authorList>
    </citation>
    <scope>FUNCTION IN ADHERENCE</scope>
    <scope>INDUCTION</scope>
    <scope>DISRUPTION PHENOTYPE</scope>
    <source>
        <strain>ATCC 23344</strain>
    </source>
</reference>
<name>BPAC_BURMA</name>
<proteinExistence type="evidence at protein level"/>
<dbReference type="EMBL" id="CP000010">
    <property type="protein sequence ID" value="AAU48866.1"/>
    <property type="molecule type" value="Genomic_DNA"/>
</dbReference>
<dbReference type="RefSeq" id="WP_004197781.1">
    <property type="nucleotide sequence ID" value="NC_006348.1"/>
</dbReference>
<dbReference type="RefSeq" id="YP_102734.1">
    <property type="nucleotide sequence ID" value="NC_006348.1"/>
</dbReference>
<dbReference type="SMR" id="A0A0H2WHF1"/>
<dbReference type="GeneID" id="92978778"/>
<dbReference type="KEGG" id="bma:BMA1027"/>
<dbReference type="PATRIC" id="fig|243160.12.peg.1065"/>
<dbReference type="eggNOG" id="COG5295">
    <property type="taxonomic scope" value="Bacteria"/>
</dbReference>
<dbReference type="HOGENOM" id="CLU_309441_0_0_4"/>
<dbReference type="Proteomes" id="UP000006693">
    <property type="component" value="Chromosome 1"/>
</dbReference>
<dbReference type="GO" id="GO:0009279">
    <property type="term" value="C:cell outer membrane"/>
    <property type="evidence" value="ECO:0007669"/>
    <property type="project" value="UniProtKB-SubCell"/>
</dbReference>
<dbReference type="GO" id="GO:0009986">
    <property type="term" value="C:cell surface"/>
    <property type="evidence" value="ECO:0007669"/>
    <property type="project" value="UniProtKB-SubCell"/>
</dbReference>
<dbReference type="GO" id="GO:0007155">
    <property type="term" value="P:cell adhesion"/>
    <property type="evidence" value="ECO:0007669"/>
    <property type="project" value="UniProtKB-KW"/>
</dbReference>
<dbReference type="GO" id="GO:0015031">
    <property type="term" value="P:protein transport"/>
    <property type="evidence" value="ECO:0007669"/>
    <property type="project" value="UniProtKB-KW"/>
</dbReference>
<dbReference type="CDD" id="cd12820">
    <property type="entry name" value="LbR_YadA-like"/>
    <property type="match status" value="4"/>
</dbReference>
<dbReference type="Gene3D" id="3.30.1300.30">
    <property type="entry name" value="GSPII I/J protein-like"/>
    <property type="match status" value="1"/>
</dbReference>
<dbReference type="Gene3D" id="2.150.10.10">
    <property type="entry name" value="Serralysin-like metalloprotease, C-terminal"/>
    <property type="match status" value="6"/>
</dbReference>
<dbReference type="InterPro" id="IPR008640">
    <property type="entry name" value="Adhesin_Head_dom"/>
</dbReference>
<dbReference type="InterPro" id="IPR008635">
    <property type="entry name" value="Coiled_stalk_dom"/>
</dbReference>
<dbReference type="InterPro" id="IPR024973">
    <property type="entry name" value="ESPR"/>
</dbReference>
<dbReference type="InterPro" id="IPR045584">
    <property type="entry name" value="Pilin-like"/>
</dbReference>
<dbReference type="InterPro" id="IPR011049">
    <property type="entry name" value="Serralysin-like_metalloprot_C"/>
</dbReference>
<dbReference type="InterPro" id="IPR005594">
    <property type="entry name" value="YadA_C"/>
</dbReference>
<dbReference type="Pfam" id="PF13018">
    <property type="entry name" value="ESPR"/>
    <property type="match status" value="1"/>
</dbReference>
<dbReference type="Pfam" id="PF03895">
    <property type="entry name" value="YadA_anchor"/>
    <property type="match status" value="1"/>
</dbReference>
<dbReference type="Pfam" id="PF05658">
    <property type="entry name" value="YadA_head"/>
    <property type="match status" value="26"/>
</dbReference>
<dbReference type="Pfam" id="PF05662">
    <property type="entry name" value="YadA_stalk"/>
    <property type="match status" value="4"/>
</dbReference>
<dbReference type="SUPFAM" id="SSF101967">
    <property type="entry name" value="Adhesin YadA, collagen-binding domain"/>
    <property type="match status" value="4"/>
</dbReference>
<dbReference type="SUPFAM" id="SSF54523">
    <property type="entry name" value="Pili subunits"/>
    <property type="match status" value="1"/>
</dbReference>
<organism>
    <name type="scientific">Burkholderia mallei (strain ATCC 23344)</name>
    <dbReference type="NCBI Taxonomy" id="243160"/>
    <lineage>
        <taxon>Bacteria</taxon>
        <taxon>Pseudomonadati</taxon>
        <taxon>Pseudomonadota</taxon>
        <taxon>Betaproteobacteria</taxon>
        <taxon>Burkholderiales</taxon>
        <taxon>Burkholderiaceae</taxon>
        <taxon>Burkholderia</taxon>
        <taxon>pseudomallei group</taxon>
    </lineage>
</organism>
<keyword id="KW-0130">Cell adhesion</keyword>
<keyword id="KW-0998">Cell outer membrane</keyword>
<keyword id="KW-0472">Membrane</keyword>
<keyword id="KW-0653">Protein transport</keyword>
<keyword id="KW-1185">Reference proteome</keyword>
<keyword id="KW-0732">Signal</keyword>
<keyword id="KW-0812">Transmembrane</keyword>
<keyword id="KW-1134">Transmembrane beta strand</keyword>
<keyword id="KW-0813">Transport</keyword>
<keyword id="KW-0843">Virulence</keyword>